<feature type="chain" id="PRO_0000291280" description="UPF0182 protein MCA2716">
    <location>
        <begin position="1"/>
        <end position="892"/>
    </location>
</feature>
<feature type="transmembrane region" description="Helical" evidence="1">
    <location>
        <begin position="7"/>
        <end position="27"/>
    </location>
</feature>
<feature type="transmembrane region" description="Helical" evidence="1">
    <location>
        <begin position="57"/>
        <end position="77"/>
    </location>
</feature>
<feature type="transmembrane region" description="Helical" evidence="1">
    <location>
        <begin position="107"/>
        <end position="127"/>
    </location>
</feature>
<feature type="transmembrane region" description="Helical" evidence="1">
    <location>
        <begin position="163"/>
        <end position="183"/>
    </location>
</feature>
<feature type="transmembrane region" description="Helical" evidence="1">
    <location>
        <begin position="206"/>
        <end position="226"/>
    </location>
</feature>
<feature type="transmembrane region" description="Helical" evidence="1">
    <location>
        <begin position="252"/>
        <end position="272"/>
    </location>
</feature>
<feature type="transmembrane region" description="Helical" evidence="1">
    <location>
        <begin position="281"/>
        <end position="301"/>
    </location>
</feature>
<evidence type="ECO:0000255" key="1">
    <source>
        <dbReference type="HAMAP-Rule" id="MF_01600"/>
    </source>
</evidence>
<evidence type="ECO:0000305" key="2"/>
<name>Y2716_METCA</name>
<proteinExistence type="inferred from homology"/>
<organism>
    <name type="scientific">Methylococcus capsulatus (strain ATCC 33009 / NCIMB 11132 / Bath)</name>
    <dbReference type="NCBI Taxonomy" id="243233"/>
    <lineage>
        <taxon>Bacteria</taxon>
        <taxon>Pseudomonadati</taxon>
        <taxon>Pseudomonadota</taxon>
        <taxon>Gammaproteobacteria</taxon>
        <taxon>Methylococcales</taxon>
        <taxon>Methylococcaceae</taxon>
        <taxon>Methylococcus</taxon>
    </lineage>
</organism>
<reference key="1">
    <citation type="journal article" date="2004" name="PLoS Biol.">
        <title>Genomic insights into methanotrophy: the complete genome sequence of Methylococcus capsulatus (Bath).</title>
        <authorList>
            <person name="Ward N.L."/>
            <person name="Larsen O."/>
            <person name="Sakwa J."/>
            <person name="Bruseth L."/>
            <person name="Khouri H.M."/>
            <person name="Durkin A.S."/>
            <person name="Dimitrov G."/>
            <person name="Jiang L."/>
            <person name="Scanlan D."/>
            <person name="Kang K.H."/>
            <person name="Lewis M.R."/>
            <person name="Nelson K.E."/>
            <person name="Methe B.A."/>
            <person name="Wu M."/>
            <person name="Heidelberg J.F."/>
            <person name="Paulsen I.T."/>
            <person name="Fouts D.E."/>
            <person name="Ravel J."/>
            <person name="Tettelin H."/>
            <person name="Ren Q."/>
            <person name="Read T.D."/>
            <person name="DeBoy R.T."/>
            <person name="Seshadri R."/>
            <person name="Salzberg S.L."/>
            <person name="Jensen H.B."/>
            <person name="Birkeland N.K."/>
            <person name="Nelson W.C."/>
            <person name="Dodson R.J."/>
            <person name="Grindhaug S.H."/>
            <person name="Holt I.E."/>
            <person name="Eidhammer I."/>
            <person name="Jonasen I."/>
            <person name="Vanaken S."/>
            <person name="Utterback T.R."/>
            <person name="Feldblyum T.V."/>
            <person name="Fraser C.M."/>
            <person name="Lillehaug J.R."/>
            <person name="Eisen J.A."/>
        </authorList>
    </citation>
    <scope>NUCLEOTIDE SEQUENCE [LARGE SCALE GENOMIC DNA]</scope>
    <source>
        <strain>ATCC 33009 / NCIMB 11132 / Bath</strain>
    </source>
</reference>
<comment type="subcellular location">
    <subcellularLocation>
        <location evidence="1">Cell membrane</location>
        <topology evidence="1">Multi-pass membrane protein</topology>
    </subcellularLocation>
</comment>
<comment type="similarity">
    <text evidence="1">Belongs to the UPF0182 family.</text>
</comment>
<comment type="sequence caution" evidence="2">
    <conflict type="erroneous initiation">
        <sequence resource="EMBL-CDS" id="AAU91217"/>
    </conflict>
</comment>
<sequence>MGNWKRLLTSAAVVMVVLAGLLLAIVLAATHFLVEWWWFKSLDLGAYFWLRFLYRYILSGGVTLFFFLIFFLNFWAASQYLGVDQAIYAAGSEESRYRRWLRMFQTGALPVYLPLSVFLAVLVALPFYHEWEAGLLFFFAPAAGVTEPVFGEDAGFHMFRIPILVLIQSELLVCASVLAVMVAALYWVEHEFSPAHRRPWPRGARIHLNLLVVLVAVVAAWGYVLQRDELLYVDAHEPVFFGPGLIELRYHLPLIWVEIVSLVVGVVAALWFAQRHRGLKLALTCALVWVSAAALRKIDVVPQLIDRFVVKPNPVKTEREFIKYNIEATLAAFDLDEIRTIDITAAPEGSETIDPHVREHLHNIPVWDPEYLDDVYQQLQGIRPYYSFTEVDTARYLVNGQIEQVNLAAREINLAKLPEEARNWENIHLRYTHGYGAVITPAAQSGDQPMQWWLRDLNMHSDVGLTTEKPDIYFGLENLDYAIVPNRLNIVDIASFDQGSSQNYSGNGGVPISSLLRRLLLSIYFRDERLFFSLNITENSQALFHRNIIERINTVTPFLALDRDPYIVVTPQRIFWIVDAYTTLNSYPVSKRMRYKFRGDTEEREFNYIRNSVKIVVDAFDGSLDYYVVDHDDPVLKGYIKAYPGLFQDASAMPPLIRDQLRFPHDFFEIQMRMYAKYHQTQPELFYQQAETWDFAKVGVRLRDGRTVMRTVAPYYFTTQLDGCENMQNFVLINPMTPIGRNNMSVLAIGGALRPDACGMPYSKSIVLYKYSKDVQVDGPAQVSAMIDQDAEIAKEFALWDQKGSHLTRGRIIIVPIGRSLLYVQPVYIESTSSVKIPELARVILSMGDIVVMETSLEAALNKLEERLIALQKARGIVPVSPVRDSPGMHPM</sequence>
<dbReference type="EMBL" id="AE017282">
    <property type="protein sequence ID" value="AAU91217.1"/>
    <property type="status" value="ALT_INIT"/>
    <property type="molecule type" value="Genomic_DNA"/>
</dbReference>
<dbReference type="RefSeq" id="WP_228370213.1">
    <property type="nucleotide sequence ID" value="NC_002977.6"/>
</dbReference>
<dbReference type="SMR" id="Q603T3"/>
<dbReference type="STRING" id="243233.MCA2716"/>
<dbReference type="GeneID" id="88224893"/>
<dbReference type="KEGG" id="mca:MCA2716"/>
<dbReference type="eggNOG" id="COG1615">
    <property type="taxonomic scope" value="Bacteria"/>
</dbReference>
<dbReference type="HOGENOM" id="CLU_007733_0_0_6"/>
<dbReference type="Proteomes" id="UP000006821">
    <property type="component" value="Chromosome"/>
</dbReference>
<dbReference type="GO" id="GO:0005576">
    <property type="term" value="C:extracellular region"/>
    <property type="evidence" value="ECO:0007669"/>
    <property type="project" value="TreeGrafter"/>
</dbReference>
<dbReference type="GO" id="GO:0005886">
    <property type="term" value="C:plasma membrane"/>
    <property type="evidence" value="ECO:0007669"/>
    <property type="project" value="UniProtKB-SubCell"/>
</dbReference>
<dbReference type="HAMAP" id="MF_01600">
    <property type="entry name" value="UPF0182"/>
    <property type="match status" value="1"/>
</dbReference>
<dbReference type="InterPro" id="IPR005372">
    <property type="entry name" value="UPF0182"/>
</dbReference>
<dbReference type="PANTHER" id="PTHR39344">
    <property type="entry name" value="UPF0182 PROTEIN SLL1060"/>
    <property type="match status" value="1"/>
</dbReference>
<dbReference type="PANTHER" id="PTHR39344:SF1">
    <property type="entry name" value="UPF0182 PROTEIN SLL1060"/>
    <property type="match status" value="1"/>
</dbReference>
<dbReference type="Pfam" id="PF03699">
    <property type="entry name" value="UPF0182"/>
    <property type="match status" value="1"/>
</dbReference>
<keyword id="KW-1003">Cell membrane</keyword>
<keyword id="KW-0472">Membrane</keyword>
<keyword id="KW-1185">Reference proteome</keyword>
<keyword id="KW-0812">Transmembrane</keyword>
<keyword id="KW-1133">Transmembrane helix</keyword>
<protein>
    <recommendedName>
        <fullName evidence="1">UPF0182 protein MCA2716</fullName>
    </recommendedName>
</protein>
<accession>Q603T3</accession>
<gene>
    <name type="ordered locus">MCA2716</name>
</gene>